<keyword id="KW-0687">Ribonucleoprotein</keyword>
<keyword id="KW-0689">Ribosomal protein</keyword>
<keyword id="KW-0694">RNA-binding</keyword>
<keyword id="KW-0699">rRNA-binding</keyword>
<sequence length="118" mass="13333">MARVKRGVVARARHKKVLKQAKGYYGARSRVYRVAVQAVTKAGQYAYRDRRQKKRQFRQLWIARINAAARQNGMSYSRFINGLKKASVEIDRKILADIAVHDKNAFSALVDAAKGALA</sequence>
<gene>
    <name evidence="1" type="primary">rplT</name>
    <name type="ordered locus">Patl_2496</name>
</gene>
<comment type="function">
    <text evidence="1">Binds directly to 23S ribosomal RNA and is necessary for the in vitro assembly process of the 50S ribosomal subunit. It is not involved in the protein synthesizing functions of that subunit.</text>
</comment>
<comment type="similarity">
    <text evidence="1">Belongs to the bacterial ribosomal protein bL20 family.</text>
</comment>
<evidence type="ECO:0000255" key="1">
    <source>
        <dbReference type="HAMAP-Rule" id="MF_00382"/>
    </source>
</evidence>
<evidence type="ECO:0000305" key="2"/>
<proteinExistence type="inferred from homology"/>
<protein>
    <recommendedName>
        <fullName evidence="1">Large ribosomal subunit protein bL20</fullName>
    </recommendedName>
    <alternativeName>
        <fullName evidence="2">50S ribosomal protein L20</fullName>
    </alternativeName>
</protein>
<feature type="chain" id="PRO_1000049038" description="Large ribosomal subunit protein bL20">
    <location>
        <begin position="1"/>
        <end position="118"/>
    </location>
</feature>
<dbReference type="EMBL" id="CP000388">
    <property type="protein sequence ID" value="ABG41012.1"/>
    <property type="molecule type" value="Genomic_DNA"/>
</dbReference>
<dbReference type="RefSeq" id="WP_006991118.1">
    <property type="nucleotide sequence ID" value="NC_008228.1"/>
</dbReference>
<dbReference type="SMR" id="Q15SX6"/>
<dbReference type="STRING" id="342610.Patl_2496"/>
<dbReference type="KEGG" id="pat:Patl_2496"/>
<dbReference type="eggNOG" id="COG0292">
    <property type="taxonomic scope" value="Bacteria"/>
</dbReference>
<dbReference type="HOGENOM" id="CLU_123265_0_1_6"/>
<dbReference type="OrthoDB" id="9808966at2"/>
<dbReference type="Proteomes" id="UP000001981">
    <property type="component" value="Chromosome"/>
</dbReference>
<dbReference type="GO" id="GO:1990904">
    <property type="term" value="C:ribonucleoprotein complex"/>
    <property type="evidence" value="ECO:0007669"/>
    <property type="project" value="UniProtKB-KW"/>
</dbReference>
<dbReference type="GO" id="GO:0005840">
    <property type="term" value="C:ribosome"/>
    <property type="evidence" value="ECO:0007669"/>
    <property type="project" value="UniProtKB-KW"/>
</dbReference>
<dbReference type="GO" id="GO:0019843">
    <property type="term" value="F:rRNA binding"/>
    <property type="evidence" value="ECO:0007669"/>
    <property type="project" value="UniProtKB-UniRule"/>
</dbReference>
<dbReference type="GO" id="GO:0003735">
    <property type="term" value="F:structural constituent of ribosome"/>
    <property type="evidence" value="ECO:0007669"/>
    <property type="project" value="InterPro"/>
</dbReference>
<dbReference type="GO" id="GO:0000027">
    <property type="term" value="P:ribosomal large subunit assembly"/>
    <property type="evidence" value="ECO:0007669"/>
    <property type="project" value="UniProtKB-UniRule"/>
</dbReference>
<dbReference type="GO" id="GO:0006412">
    <property type="term" value="P:translation"/>
    <property type="evidence" value="ECO:0007669"/>
    <property type="project" value="InterPro"/>
</dbReference>
<dbReference type="CDD" id="cd07026">
    <property type="entry name" value="Ribosomal_L20"/>
    <property type="match status" value="1"/>
</dbReference>
<dbReference type="FunFam" id="1.10.1900.20:FF:000001">
    <property type="entry name" value="50S ribosomal protein L20"/>
    <property type="match status" value="1"/>
</dbReference>
<dbReference type="Gene3D" id="6.10.160.10">
    <property type="match status" value="1"/>
</dbReference>
<dbReference type="Gene3D" id="1.10.1900.20">
    <property type="entry name" value="Ribosomal protein L20"/>
    <property type="match status" value="1"/>
</dbReference>
<dbReference type="HAMAP" id="MF_00382">
    <property type="entry name" value="Ribosomal_bL20"/>
    <property type="match status" value="1"/>
</dbReference>
<dbReference type="InterPro" id="IPR005813">
    <property type="entry name" value="Ribosomal_bL20"/>
</dbReference>
<dbReference type="InterPro" id="IPR049946">
    <property type="entry name" value="RIBOSOMAL_L20_CS"/>
</dbReference>
<dbReference type="InterPro" id="IPR035566">
    <property type="entry name" value="Ribosomal_protein_bL20_C"/>
</dbReference>
<dbReference type="NCBIfam" id="TIGR01032">
    <property type="entry name" value="rplT_bact"/>
    <property type="match status" value="1"/>
</dbReference>
<dbReference type="PANTHER" id="PTHR10986">
    <property type="entry name" value="39S RIBOSOMAL PROTEIN L20"/>
    <property type="match status" value="1"/>
</dbReference>
<dbReference type="Pfam" id="PF00453">
    <property type="entry name" value="Ribosomal_L20"/>
    <property type="match status" value="1"/>
</dbReference>
<dbReference type="PRINTS" id="PR00062">
    <property type="entry name" value="RIBOSOMALL20"/>
</dbReference>
<dbReference type="SUPFAM" id="SSF74731">
    <property type="entry name" value="Ribosomal protein L20"/>
    <property type="match status" value="1"/>
</dbReference>
<dbReference type="PROSITE" id="PS00937">
    <property type="entry name" value="RIBOSOMAL_L20"/>
    <property type="match status" value="1"/>
</dbReference>
<accession>Q15SX6</accession>
<name>RL20_PSEA6</name>
<organism>
    <name type="scientific">Pseudoalteromonas atlantica (strain T6c / ATCC BAA-1087)</name>
    <dbReference type="NCBI Taxonomy" id="3042615"/>
    <lineage>
        <taxon>Bacteria</taxon>
        <taxon>Pseudomonadati</taxon>
        <taxon>Pseudomonadota</taxon>
        <taxon>Gammaproteobacteria</taxon>
        <taxon>Alteromonadales</taxon>
        <taxon>Alteromonadaceae</taxon>
        <taxon>Paraglaciecola</taxon>
    </lineage>
</organism>
<reference key="1">
    <citation type="submission" date="2006-06" db="EMBL/GenBank/DDBJ databases">
        <title>Complete sequence of Pseudoalteromonas atlantica T6c.</title>
        <authorList>
            <consortium name="US DOE Joint Genome Institute"/>
            <person name="Copeland A."/>
            <person name="Lucas S."/>
            <person name="Lapidus A."/>
            <person name="Barry K."/>
            <person name="Detter J.C."/>
            <person name="Glavina del Rio T."/>
            <person name="Hammon N."/>
            <person name="Israni S."/>
            <person name="Dalin E."/>
            <person name="Tice H."/>
            <person name="Pitluck S."/>
            <person name="Saunders E."/>
            <person name="Brettin T."/>
            <person name="Bruce D."/>
            <person name="Han C."/>
            <person name="Tapia R."/>
            <person name="Gilna P."/>
            <person name="Schmutz J."/>
            <person name="Larimer F."/>
            <person name="Land M."/>
            <person name="Hauser L."/>
            <person name="Kyrpides N."/>
            <person name="Kim E."/>
            <person name="Karls A.C."/>
            <person name="Bartlett D."/>
            <person name="Higgins B.P."/>
            <person name="Richardson P."/>
        </authorList>
    </citation>
    <scope>NUCLEOTIDE SEQUENCE [LARGE SCALE GENOMIC DNA]</scope>
    <source>
        <strain>T6c / ATCC BAA-1087</strain>
    </source>
</reference>